<sequence>MAVITKIEVQKRSKERFNIYIDKGQGEEYGFSVNEVILIKHGLQKGLEIDEIALGNILYNEEVQKAYLQAISYLSYQMRTKLEIEDFLRKKEVGQAIISEVVSKLLHDRYINDKEYAILYTRTQSNVNRKGPTVIKRELLNKGVQDLIITHSLQEYPKEKQIENALILIEKKKKSYQKHSFLQMKLKLDEMLVRKGYSRDVIQICLEELKDEKDDEKQREALHYHGNKYYEKYKKYDGWTFENKMKQALYRKGFSIDEIEIFLQMKREEG</sequence>
<evidence type="ECO:0000255" key="1">
    <source>
        <dbReference type="HAMAP-Rule" id="MF_01114"/>
    </source>
</evidence>
<accession>B9J2U7</accession>
<protein>
    <recommendedName>
        <fullName evidence="1">Regulatory protein RecX</fullName>
    </recommendedName>
</protein>
<organism>
    <name type="scientific">Bacillus cereus (strain Q1)</name>
    <dbReference type="NCBI Taxonomy" id="361100"/>
    <lineage>
        <taxon>Bacteria</taxon>
        <taxon>Bacillati</taxon>
        <taxon>Bacillota</taxon>
        <taxon>Bacilli</taxon>
        <taxon>Bacillales</taxon>
        <taxon>Bacillaceae</taxon>
        <taxon>Bacillus</taxon>
        <taxon>Bacillus cereus group</taxon>
    </lineage>
</organism>
<name>RECX_BACCQ</name>
<keyword id="KW-0963">Cytoplasm</keyword>
<gene>
    <name evidence="1" type="primary">recX</name>
    <name type="ordered locus">BCQ_0544</name>
</gene>
<comment type="function">
    <text evidence="1">Modulates RecA activity.</text>
</comment>
<comment type="subcellular location">
    <subcellularLocation>
        <location evidence="1">Cytoplasm</location>
    </subcellularLocation>
</comment>
<comment type="similarity">
    <text evidence="1">Belongs to the RecX family.</text>
</comment>
<proteinExistence type="inferred from homology"/>
<dbReference type="EMBL" id="CP000227">
    <property type="protein sequence ID" value="ACM11016.1"/>
    <property type="molecule type" value="Genomic_DNA"/>
</dbReference>
<dbReference type="SMR" id="B9J2U7"/>
<dbReference type="KEGG" id="bcq:BCQ_0544"/>
<dbReference type="HOGENOM" id="CLU_066607_4_0_9"/>
<dbReference type="Proteomes" id="UP000000441">
    <property type="component" value="Chromosome"/>
</dbReference>
<dbReference type="GO" id="GO:0005737">
    <property type="term" value="C:cytoplasm"/>
    <property type="evidence" value="ECO:0007669"/>
    <property type="project" value="UniProtKB-SubCell"/>
</dbReference>
<dbReference type="GO" id="GO:0006282">
    <property type="term" value="P:regulation of DNA repair"/>
    <property type="evidence" value="ECO:0007669"/>
    <property type="project" value="UniProtKB-UniRule"/>
</dbReference>
<dbReference type="Gene3D" id="1.10.10.10">
    <property type="entry name" value="Winged helix-like DNA-binding domain superfamily/Winged helix DNA-binding domain"/>
    <property type="match status" value="4"/>
</dbReference>
<dbReference type="HAMAP" id="MF_01114">
    <property type="entry name" value="RecX"/>
    <property type="match status" value="1"/>
</dbReference>
<dbReference type="InterPro" id="IPR053926">
    <property type="entry name" value="RecX_HTH_1st"/>
</dbReference>
<dbReference type="InterPro" id="IPR053924">
    <property type="entry name" value="RecX_HTH_2nd"/>
</dbReference>
<dbReference type="InterPro" id="IPR053925">
    <property type="entry name" value="RecX_HTH_3rd"/>
</dbReference>
<dbReference type="InterPro" id="IPR003783">
    <property type="entry name" value="Regulatory_RecX"/>
</dbReference>
<dbReference type="InterPro" id="IPR036388">
    <property type="entry name" value="WH-like_DNA-bd_sf"/>
</dbReference>
<dbReference type="NCBIfam" id="NF010733">
    <property type="entry name" value="PRK14135.1"/>
    <property type="match status" value="1"/>
</dbReference>
<dbReference type="PANTHER" id="PTHR33602">
    <property type="entry name" value="REGULATORY PROTEIN RECX FAMILY PROTEIN"/>
    <property type="match status" value="1"/>
</dbReference>
<dbReference type="PANTHER" id="PTHR33602:SF1">
    <property type="entry name" value="REGULATORY PROTEIN RECX FAMILY PROTEIN"/>
    <property type="match status" value="1"/>
</dbReference>
<dbReference type="Pfam" id="PF21982">
    <property type="entry name" value="RecX_HTH1"/>
    <property type="match status" value="1"/>
</dbReference>
<dbReference type="Pfam" id="PF02631">
    <property type="entry name" value="RecX_HTH2"/>
    <property type="match status" value="1"/>
</dbReference>
<dbReference type="Pfam" id="PF21981">
    <property type="entry name" value="RecX_HTH3"/>
    <property type="match status" value="2"/>
</dbReference>
<feature type="chain" id="PRO_1000164013" description="Regulatory protein RecX">
    <location>
        <begin position="1"/>
        <end position="270"/>
    </location>
</feature>
<reference key="1">
    <citation type="journal article" date="2009" name="J. Bacteriol.">
        <title>Complete genome sequence of the extremophilic Bacillus cereus strain Q1 with industrial applications.</title>
        <authorList>
            <person name="Xiong Z."/>
            <person name="Jiang Y."/>
            <person name="Qi D."/>
            <person name="Lu H."/>
            <person name="Yang F."/>
            <person name="Yang J."/>
            <person name="Chen L."/>
            <person name="Sun L."/>
            <person name="Xu X."/>
            <person name="Xue Y."/>
            <person name="Zhu Y."/>
            <person name="Jin Q."/>
        </authorList>
    </citation>
    <scope>NUCLEOTIDE SEQUENCE [LARGE SCALE GENOMIC DNA]</scope>
    <source>
        <strain>Q1</strain>
    </source>
</reference>